<evidence type="ECO:0000250" key="1">
    <source>
        <dbReference type="UniProtKB" id="A6QDA0"/>
    </source>
</evidence>
<evidence type="ECO:0000250" key="2">
    <source>
        <dbReference type="UniProtKB" id="Q2G1N3"/>
    </source>
</evidence>
<evidence type="ECO:0000305" key="3"/>
<name>SBNA_STAAC</name>
<comment type="function">
    <text evidence="1">Catalyzes the synthesis of N-((2S)-2-amino-2-carboxyethyl)-L-glutamate (ACEGA) from O-phospho-L-serine and L-glutamate. Involved in the biosynthesis of L-2,3-diaminopropionic acid (L-Dap), a precursor of staphyloferrin B and antibiotics.</text>
</comment>
<comment type="catalytic activity">
    <reaction evidence="1">
        <text>O-phospho-L-serine + L-glutamate = N-[(2S)-2-amino-2-carboxyethyl]-L-glutamate + phosphate + H(+)</text>
        <dbReference type="Rhea" id="RHEA:52384"/>
        <dbReference type="ChEBI" id="CHEBI:15378"/>
        <dbReference type="ChEBI" id="CHEBI:29985"/>
        <dbReference type="ChEBI" id="CHEBI:43474"/>
        <dbReference type="ChEBI" id="CHEBI:57524"/>
        <dbReference type="ChEBI" id="CHEBI:134610"/>
        <dbReference type="EC" id="2.5.1.140"/>
    </reaction>
</comment>
<comment type="cofactor">
    <cofactor evidence="1">
        <name>pyridoxal 5'-phosphate</name>
        <dbReference type="ChEBI" id="CHEBI:597326"/>
    </cofactor>
</comment>
<comment type="pathway">
    <text evidence="1">Siderophore biosynthesis.</text>
</comment>
<comment type="subunit">
    <text evidence="1">Homodimer.</text>
</comment>
<comment type="induction">
    <text evidence="2">Up-regulated under iron-deficient growth conditions. Repressed by Fur under iron-rich growth conditions.</text>
</comment>
<comment type="similarity">
    <text evidence="3">Belongs to the cysteine synthase/cystathionine beta-synthase family. SbnA subfamily.</text>
</comment>
<comment type="sequence caution" evidence="3">
    <conflict type="erroneous initiation">
        <sequence resource="EMBL-CDS" id="AAW38743"/>
    </conflict>
    <text>Truncated N-terminus.</text>
</comment>
<gene>
    <name type="primary">sbnA</name>
    <name type="ordered locus">SACOL0100</name>
</gene>
<accession>Q5HJQ3</accession>
<dbReference type="EC" id="2.5.1.140" evidence="1"/>
<dbReference type="EMBL" id="CP000046">
    <property type="protein sequence ID" value="AAW38743.1"/>
    <property type="status" value="ALT_INIT"/>
    <property type="molecule type" value="Genomic_DNA"/>
</dbReference>
<dbReference type="RefSeq" id="WP_000570808.1">
    <property type="nucleotide sequence ID" value="NZ_JBGOFO010000001.1"/>
</dbReference>
<dbReference type="SMR" id="Q5HJQ3"/>
<dbReference type="KEGG" id="sac:SACOL0100"/>
<dbReference type="HOGENOM" id="CLU_021018_1_0_9"/>
<dbReference type="Proteomes" id="UP000000530">
    <property type="component" value="Chromosome"/>
</dbReference>
<dbReference type="GO" id="GO:0016765">
    <property type="term" value="F:transferase activity, transferring alkyl or aryl (other than methyl) groups"/>
    <property type="evidence" value="ECO:0007669"/>
    <property type="project" value="UniProtKB-ARBA"/>
</dbReference>
<dbReference type="GO" id="GO:0006535">
    <property type="term" value="P:cysteine biosynthetic process from serine"/>
    <property type="evidence" value="ECO:0007669"/>
    <property type="project" value="InterPro"/>
</dbReference>
<dbReference type="CDD" id="cd01561">
    <property type="entry name" value="CBS_like"/>
    <property type="match status" value="1"/>
</dbReference>
<dbReference type="Gene3D" id="3.40.50.1100">
    <property type="match status" value="2"/>
</dbReference>
<dbReference type="InterPro" id="IPR050214">
    <property type="entry name" value="Cys_Synth/Cystath_Beta-Synth"/>
</dbReference>
<dbReference type="InterPro" id="IPR001216">
    <property type="entry name" value="P-phosphate_BS"/>
</dbReference>
<dbReference type="InterPro" id="IPR023927">
    <property type="entry name" value="SbnA"/>
</dbReference>
<dbReference type="InterPro" id="IPR001926">
    <property type="entry name" value="TrpB-like_PALP"/>
</dbReference>
<dbReference type="InterPro" id="IPR036052">
    <property type="entry name" value="TrpB-like_PALP_sf"/>
</dbReference>
<dbReference type="NCBIfam" id="TIGR03945">
    <property type="entry name" value="PLP_SbnA_fam"/>
    <property type="match status" value="1"/>
</dbReference>
<dbReference type="PANTHER" id="PTHR10314">
    <property type="entry name" value="CYSTATHIONINE BETA-SYNTHASE"/>
    <property type="match status" value="1"/>
</dbReference>
<dbReference type="Pfam" id="PF00291">
    <property type="entry name" value="PALP"/>
    <property type="match status" value="1"/>
</dbReference>
<dbReference type="SUPFAM" id="SSF53686">
    <property type="entry name" value="Tryptophan synthase beta subunit-like PLP-dependent enzymes"/>
    <property type="match status" value="1"/>
</dbReference>
<dbReference type="PROSITE" id="PS00901">
    <property type="entry name" value="CYS_SYNTHASE"/>
    <property type="match status" value="1"/>
</dbReference>
<organism>
    <name type="scientific">Staphylococcus aureus (strain COL)</name>
    <dbReference type="NCBI Taxonomy" id="93062"/>
    <lineage>
        <taxon>Bacteria</taxon>
        <taxon>Bacillati</taxon>
        <taxon>Bacillota</taxon>
        <taxon>Bacilli</taxon>
        <taxon>Bacillales</taxon>
        <taxon>Staphylococcaceae</taxon>
        <taxon>Staphylococcus</taxon>
    </lineage>
</organism>
<sequence>MIEKSQACHDSLLDSVGQTPMVQLHQLFPKHEVFAKLEYMNPGGSMKDRPAKYIIEHGIKHGLITENTHLIESTSGNLGIALAMIAKIKGLKLTCVVDPKISPTNLKIIKSYGANVEMVEEPDAHGGYLMTRIAKVQELLATIDDAYWINQYANELNWQSHYHGAGTEIVETIKQPIDYFVAPVSTTGSIMGMSRKIKEVHPNAQIVAVDAKGSVIFGDKPINRELPGIGASRVPEILNRSEINQVIHVDDYQSALGCRKLIDYEGIFAGGSTGSIIAAIEQLITSIEEGATIVTILPDRGDRYLDLVYSDTWLEKMKSRQGVKSE</sequence>
<proteinExistence type="inferred from homology"/>
<reference key="1">
    <citation type="journal article" date="2005" name="J. Bacteriol.">
        <title>Insights on evolution of virulence and resistance from the complete genome analysis of an early methicillin-resistant Staphylococcus aureus strain and a biofilm-producing methicillin-resistant Staphylococcus epidermidis strain.</title>
        <authorList>
            <person name="Gill S.R."/>
            <person name="Fouts D.E."/>
            <person name="Archer G.L."/>
            <person name="Mongodin E.F."/>
            <person name="DeBoy R.T."/>
            <person name="Ravel J."/>
            <person name="Paulsen I.T."/>
            <person name="Kolonay J.F."/>
            <person name="Brinkac L.M."/>
            <person name="Beanan M.J."/>
            <person name="Dodson R.J."/>
            <person name="Daugherty S.C."/>
            <person name="Madupu R."/>
            <person name="Angiuoli S.V."/>
            <person name="Durkin A.S."/>
            <person name="Haft D.H."/>
            <person name="Vamathevan J.J."/>
            <person name="Khouri H."/>
            <person name="Utterback T.R."/>
            <person name="Lee C."/>
            <person name="Dimitrov G."/>
            <person name="Jiang L."/>
            <person name="Qin H."/>
            <person name="Weidman J."/>
            <person name="Tran K."/>
            <person name="Kang K.H."/>
            <person name="Hance I.R."/>
            <person name="Nelson K.E."/>
            <person name="Fraser C.M."/>
        </authorList>
    </citation>
    <scope>NUCLEOTIDE SEQUENCE [LARGE SCALE GENOMIC DNA]</scope>
    <source>
        <strain>COL</strain>
    </source>
</reference>
<feature type="chain" id="PRO_0000395012" description="N-(2-amino-2-carboxyethyl)-L-glutamate synthase">
    <location>
        <begin position="1"/>
        <end position="326"/>
    </location>
</feature>
<feature type="binding site" evidence="1">
    <location>
        <position position="77"/>
    </location>
    <ligand>
        <name>pyridoxal 5'-phosphate</name>
        <dbReference type="ChEBI" id="CHEBI:597326"/>
    </ligand>
</feature>
<feature type="binding site" evidence="1">
    <location>
        <begin position="185"/>
        <end position="189"/>
    </location>
    <ligand>
        <name>pyridoxal 5'-phosphate</name>
        <dbReference type="ChEBI" id="CHEBI:597326"/>
    </ligand>
</feature>
<feature type="binding site" evidence="1">
    <location>
        <position position="272"/>
    </location>
    <ligand>
        <name>pyridoxal 5'-phosphate</name>
        <dbReference type="ChEBI" id="CHEBI:597326"/>
    </ligand>
</feature>
<feature type="modified residue" description="N6-(pyridoxal phosphate)lysine" evidence="1">
    <location>
        <position position="47"/>
    </location>
</feature>
<protein>
    <recommendedName>
        <fullName evidence="3">N-(2-amino-2-carboxyethyl)-L-glutamate synthase</fullName>
        <shortName evidence="3">ACEGA synthase</shortName>
        <ecNumber evidence="1">2.5.1.140</ecNumber>
    </recommendedName>
</protein>
<keyword id="KW-0663">Pyridoxal phosphate</keyword>
<keyword id="KW-0808">Transferase</keyword>